<sequence>AVDAKLLDMLKANGQISASQYTELQAELAKDQKEKQIAQ</sequence>
<protein>
    <recommendedName>
        <fullName>Phosphate starvation-inducible protein 1</fullName>
        <shortName>PSI1</shortName>
    </recommendedName>
</protein>
<name>PSI1_PSEFL</name>
<dbReference type="SMR" id="P80694"/>
<dbReference type="eggNOG" id="COG2188">
    <property type="taxonomic scope" value="Bacteria"/>
</dbReference>
<dbReference type="GO" id="GO:0009279">
    <property type="term" value="C:cell outer membrane"/>
    <property type="evidence" value="ECO:0007669"/>
    <property type="project" value="UniProtKB-SubCell"/>
</dbReference>
<reference key="1">
    <citation type="journal article" date="1997" name="Microbiology">
        <title>A phosphate-starvation-inducible outer-membrane protein of Pseudomonas fluorescens Ag1 as an immunological phosphate-starvation marker.</title>
        <authorList>
            <person name="Leopold K."/>
            <person name="Jacobsen S."/>
            <person name="Nybroe O."/>
        </authorList>
    </citation>
    <scope>PROTEIN SEQUENCE</scope>
    <source>
        <strain>AG1</strain>
    </source>
</reference>
<proteinExistence type="evidence at protein level"/>
<organism>
    <name type="scientific">Pseudomonas fluorescens</name>
    <dbReference type="NCBI Taxonomy" id="294"/>
    <lineage>
        <taxon>Bacteria</taxon>
        <taxon>Pseudomonadati</taxon>
        <taxon>Pseudomonadota</taxon>
        <taxon>Gammaproteobacteria</taxon>
        <taxon>Pseudomonadales</taxon>
        <taxon>Pseudomonadaceae</taxon>
        <taxon>Pseudomonas</taxon>
    </lineage>
</organism>
<comment type="subcellular location">
    <subcellularLocation>
        <location>Cell outer membrane</location>
    </subcellularLocation>
</comment>
<feature type="chain" id="PRO_0000097066" description="Phosphate starvation-inducible protein 1">
    <location>
        <begin position="1"/>
        <end position="39" status="greater than"/>
    </location>
</feature>
<feature type="non-terminal residue">
    <location>
        <position position="39"/>
    </location>
</feature>
<accession>P80694</accession>
<keyword id="KW-0998">Cell outer membrane</keyword>
<keyword id="KW-0903">Direct protein sequencing</keyword>
<keyword id="KW-0472">Membrane</keyword>